<reference key="1">
    <citation type="journal article" date="1989" name="Arch. Virol.">
        <title>Comparative sequence analysis of VP7 genes from five Australian porcine rotaviruses.</title>
        <authorList>
            <person name="Huang J.A."/>
            <person name="Nagesha H.S."/>
            <person name="Dyall-Smith M.L."/>
            <person name="Holmes I.H."/>
        </authorList>
    </citation>
    <scope>NUCLEOTIDE SEQUENCE</scope>
</reference>
<accession>P32546</accession>
<proteinExistence type="inferred from homology"/>
<protein>
    <recommendedName>
        <fullName evidence="2">Outer capsid glycoprotein VP7</fullName>
    </recommendedName>
</protein>
<comment type="function">
    <text evidence="2">Calcium-binding protein that interacts with rotavirus cell receptors once the initial attachment by VP4 has been achieved. Rotavirus attachment and entry into the host cell probably involves multiple sequential contacts between the outer capsid proteins VP4 and VP7, and the cell receptors. Following entry into the host cell, low intracellular or intravesicular Ca(2+) concentration probably causes the calcium-stabilized VP7 trimers to dissociate from the virion. This step is probably necessary for the membrane-disrupting entry step and the release of VP4, which is locked onto the virion by VP7.</text>
</comment>
<comment type="subunit">
    <text evidence="2">Homotrimer; disulfide-linked. 2 Ca(2+) ions bound at each subunit interface in the trimer hold the trimer together. Interacts with the intermediate capsid protein VP6. Interacts with the outer capsid protein VP5*.</text>
</comment>
<comment type="subcellular location">
    <subcellularLocation>
        <location evidence="2">Virion</location>
    </subcellularLocation>
    <subcellularLocation>
        <location evidence="2">Host endoplasmic reticulum lumen</location>
    </subcellularLocation>
    <text evidence="2">The outer layer contains 780 copies of VP7, grouped as 260 trimers. Immature double-layered particles assembled in the cytoplasm bud across the membrane of the endoplasmic reticulum, acquiring during this process a transient lipid membrane that is modified with the ER resident viral glycoproteins NSP4 and VP7; these enveloped particles also contain VP4. As the particles move towards the interior of the ER cisternae, the transient lipid membrane and the non-structural protein NSP4 are lost, while the virus surface proteins VP4 and VP7 rearrange to form the outermost virus protein layer, yielding mature infectious triple-layered particles.</text>
</comment>
<comment type="alternative products">
    <event type="alternative initiation"/>
    <isoform>
        <id>P32546-1</id>
        <name>1</name>
        <sequence type="displayed"/>
    </isoform>
    <isoform>
        <id>P32546-2</id>
        <name>2</name>
        <sequence type="described" ref="VSP_038607"/>
    </isoform>
</comment>
<comment type="PTM">
    <text evidence="2">N-glycosylated.</text>
</comment>
<comment type="PTM">
    <text evidence="2">The N-terminus is blocked possibly by pyroglutamic acid.</text>
</comment>
<comment type="miscellaneous">
    <text evidence="2">Some rotavirus strains are neuraminidase-sensitive and require sialic acid to attach to the cell surface. Some rotavirus strains are integrin-dependent. Some rotavirus strains depend on ganglioside for their entry into the host cell. Hsp70 also seems to be involved in the entry of some strains.</text>
</comment>
<comment type="miscellaneous">
    <text evidence="2">In group A rotaviruses, VP7 defines the G serotype.</text>
</comment>
<comment type="miscellaneous">
    <molecule>Isoform 2</molecule>
    <text evidence="3">Produced by alternative initiation at Met-30 of isoform 1.</text>
</comment>
<comment type="similarity">
    <text evidence="2">Belongs to the rotavirus VP7 family.</text>
</comment>
<dbReference type="SMR" id="P32546"/>
<dbReference type="GO" id="GO:0044166">
    <property type="term" value="C:host cell endoplasmic reticulum lumen"/>
    <property type="evidence" value="ECO:0007669"/>
    <property type="project" value="UniProtKB-SubCell"/>
</dbReference>
<dbReference type="GO" id="GO:0039621">
    <property type="term" value="C:T=13 icosahedral viral capsid"/>
    <property type="evidence" value="ECO:0007669"/>
    <property type="project" value="UniProtKB-UniRule"/>
</dbReference>
<dbReference type="GO" id="GO:0039624">
    <property type="term" value="C:viral outer capsid"/>
    <property type="evidence" value="ECO:0007669"/>
    <property type="project" value="UniProtKB-UniRule"/>
</dbReference>
<dbReference type="GO" id="GO:0046872">
    <property type="term" value="F:metal ion binding"/>
    <property type="evidence" value="ECO:0007669"/>
    <property type="project" value="UniProtKB-KW"/>
</dbReference>
<dbReference type="FunFam" id="2.60.120.800:FF:000001">
    <property type="entry name" value="Outer capsid glycoprotein VP7"/>
    <property type="match status" value="1"/>
</dbReference>
<dbReference type="Gene3D" id="3.40.50.11130">
    <property type="entry name" value="Glycoprotein VP7, domain 1"/>
    <property type="match status" value="1"/>
</dbReference>
<dbReference type="Gene3D" id="2.60.120.800">
    <property type="entry name" value="Rotavirus outer-layer protein VP7, domain 2"/>
    <property type="match status" value="1"/>
</dbReference>
<dbReference type="HAMAP" id="MF_04130">
    <property type="entry name" value="Rota_VP7"/>
    <property type="match status" value="1"/>
</dbReference>
<dbReference type="HAMAP" id="MF_04131">
    <property type="entry name" value="Rota_VP7_A"/>
    <property type="match status" value="1"/>
</dbReference>
<dbReference type="InterPro" id="IPR001963">
    <property type="entry name" value="VP7"/>
</dbReference>
<dbReference type="InterPro" id="IPR042207">
    <property type="entry name" value="VP7_1"/>
</dbReference>
<dbReference type="InterPro" id="IPR042210">
    <property type="entry name" value="VP7_2"/>
</dbReference>
<dbReference type="Pfam" id="PF00434">
    <property type="entry name" value="VP7"/>
    <property type="match status" value="1"/>
</dbReference>
<feature type="signal peptide" evidence="2">
    <location>
        <begin position="1"/>
        <end position="50"/>
    </location>
</feature>
<feature type="chain" id="PRO_0000149612" description="Outer capsid glycoprotein VP7" evidence="2">
    <location>
        <begin position="51"/>
        <end position="326"/>
    </location>
</feature>
<feature type="region of interest" description="CNP motif; interaction with ITGAV/ITGB3" evidence="2">
    <location>
        <begin position="165"/>
        <end position="167"/>
    </location>
</feature>
<feature type="region of interest" description="GPR motif; interaction with ITGAX/ITGB2" evidence="2">
    <location>
        <begin position="253"/>
        <end position="255"/>
    </location>
</feature>
<feature type="binding site" evidence="2">
    <location>
        <position position="95"/>
    </location>
    <ligand>
        <name>Ca(2+)</name>
        <dbReference type="ChEBI" id="CHEBI:29108"/>
        <label>1</label>
    </ligand>
</feature>
<feature type="binding site" evidence="2">
    <location>
        <position position="177"/>
    </location>
    <ligand>
        <name>Ca(2+)</name>
        <dbReference type="ChEBI" id="CHEBI:29108"/>
        <label>2</label>
    </ligand>
</feature>
<feature type="binding site" evidence="2">
    <location>
        <position position="206"/>
    </location>
    <ligand>
        <name>Ca(2+)</name>
        <dbReference type="ChEBI" id="CHEBI:29108"/>
        <label>1</label>
    </ligand>
</feature>
<feature type="binding site" evidence="2">
    <location>
        <position position="214"/>
    </location>
    <ligand>
        <name>Ca(2+)</name>
        <dbReference type="ChEBI" id="CHEBI:29108"/>
        <label>1</label>
    </ligand>
</feature>
<feature type="binding site" evidence="2">
    <location>
        <position position="216"/>
    </location>
    <ligand>
        <name>Ca(2+)</name>
        <dbReference type="ChEBI" id="CHEBI:29108"/>
        <label>1</label>
    </ligand>
</feature>
<feature type="binding site" evidence="2">
    <location>
        <position position="228"/>
    </location>
    <ligand>
        <name>Ca(2+)</name>
        <dbReference type="ChEBI" id="CHEBI:29108"/>
        <label>2</label>
    </ligand>
</feature>
<feature type="binding site" evidence="2">
    <location>
        <position position="229"/>
    </location>
    <ligand>
        <name>Ca(2+)</name>
        <dbReference type="ChEBI" id="CHEBI:29108"/>
        <label>2</label>
    </ligand>
</feature>
<feature type="binding site" evidence="2">
    <location>
        <position position="231"/>
    </location>
    <ligand>
        <name>Ca(2+)</name>
        <dbReference type="ChEBI" id="CHEBI:29108"/>
        <label>2</label>
    </ligand>
</feature>
<feature type="binding site" evidence="2">
    <location>
        <position position="301"/>
    </location>
    <ligand>
        <name>Ca(2+)</name>
        <dbReference type="ChEBI" id="CHEBI:29108"/>
        <label>2</label>
    </ligand>
</feature>
<feature type="glycosylation site" description="N-linked (GlcNAc...) asparagine; by host" evidence="1">
    <location>
        <position position="69"/>
    </location>
</feature>
<feature type="disulfide bond" evidence="2">
    <location>
        <begin position="82"/>
        <end position="135"/>
    </location>
</feature>
<feature type="disulfide bond" evidence="2">
    <location>
        <begin position="165"/>
        <end position="249"/>
    </location>
</feature>
<feature type="disulfide bond" evidence="2">
    <location>
        <begin position="191"/>
        <end position="244"/>
    </location>
</feature>
<feature type="disulfide bond" evidence="2">
    <location>
        <begin position="196"/>
        <end position="207"/>
    </location>
</feature>
<feature type="splice variant" id="VSP_038607" description="In isoform 2." evidence="3">
    <location>
        <begin position="1"/>
        <end position="29"/>
    </location>
</feature>
<organismHost>
    <name type="scientific">Sus scrofa</name>
    <name type="common">Pig</name>
    <dbReference type="NCBI Taxonomy" id="9823"/>
</organismHost>
<evidence type="ECO:0000255" key="1"/>
<evidence type="ECO:0000255" key="2">
    <source>
        <dbReference type="HAMAP-Rule" id="MF_04131"/>
    </source>
</evidence>
<evidence type="ECO:0000305" key="3"/>
<name>VP7_ROTP3</name>
<organism>
    <name type="scientific">Rotavirus A (isolate RVA/Pig/Australia/CRW-8/1987/G3P9[7])</name>
    <name type="common">RV-A</name>
    <dbReference type="NCBI Taxonomy" id="31578"/>
    <lineage>
        <taxon>Viruses</taxon>
        <taxon>Riboviria</taxon>
        <taxon>Orthornavirae</taxon>
        <taxon>Duplornaviricota</taxon>
        <taxon>Resentoviricetes</taxon>
        <taxon>Reovirales</taxon>
        <taxon>Sedoreoviridae</taxon>
        <taxon>Rotavirus</taxon>
        <taxon>Rotavirus A</taxon>
    </lineage>
</organism>
<sequence>MYGIEYTTVLTFLISVILLNYILKSLTRIMDFIIYRFLFVIVILLPLLSAQNYGINLPITGSMDTPYINSTQGEVFLTSTLCLYYPTEAATEINDNSWKDTLSQLFLTKGWPTGSVYFKDYTDIASFSVDPQLYCDYNLVMMKYDATLQLDMSELADLILNEWLCNPMDITLYYYQQTDEANKWISMGSSCTIKVCPLNTQTLGIGCLTTDTNTFEEVATAEKLAITDVVDGVNHKLSVTTNTCTIRNCKKLGPRENVAVIQVGGSDILDITADPTTAPQTERMMRVNWKKWWQVFYTIVDYVNQIVQAMSKRSRSLNSAAFYYRV</sequence>
<keyword id="KW-0024">Alternative initiation</keyword>
<keyword id="KW-0106">Calcium</keyword>
<keyword id="KW-0167">Capsid protein</keyword>
<keyword id="KW-1015">Disulfide bond</keyword>
<keyword id="KW-0325">Glycoprotein</keyword>
<keyword id="KW-1038">Host endoplasmic reticulum</keyword>
<keyword id="KW-0945">Host-virus interaction</keyword>
<keyword id="KW-0479">Metal-binding</keyword>
<keyword id="KW-1152">Outer capsid protein</keyword>
<keyword id="KW-0732">Signal</keyword>
<keyword id="KW-1146">T=13 icosahedral capsid protein</keyword>
<keyword id="KW-0946">Virion</keyword>